<gene>
    <name type="primary">MEF2A</name>
</gene>
<evidence type="ECO:0000250" key="1"/>
<evidence type="ECO:0000250" key="2">
    <source>
        <dbReference type="UniProtKB" id="Q02078"/>
    </source>
</evidence>
<evidence type="ECO:0000250" key="3">
    <source>
        <dbReference type="UniProtKB" id="Q2MJT0"/>
    </source>
</evidence>
<evidence type="ECO:0000250" key="4">
    <source>
        <dbReference type="UniProtKB" id="Q60929"/>
    </source>
</evidence>
<evidence type="ECO:0000255" key="5"/>
<evidence type="ECO:0000255" key="6">
    <source>
        <dbReference type="PROSITE-ProRule" id="PRU00251"/>
    </source>
</evidence>
<evidence type="ECO:0000256" key="7">
    <source>
        <dbReference type="SAM" id="MobiDB-lite"/>
    </source>
</evidence>
<evidence type="ECO:0000305" key="8"/>
<protein>
    <recommendedName>
        <fullName>Myocyte-specific enhancer factor 2A</fullName>
    </recommendedName>
</protein>
<name>MEF2A_PONAB</name>
<proteinExistence type="evidence at transcript level"/>
<feature type="chain" id="PRO_0000366969" description="Myocyte-specific enhancer factor 2A">
    <location>
        <begin position="1"/>
        <end position="494"/>
    </location>
</feature>
<feature type="domain" description="MADS-box" evidence="6">
    <location>
        <begin position="3"/>
        <end position="57"/>
    </location>
</feature>
<feature type="DNA-binding region" description="Mef2-type" evidence="5">
    <location>
        <begin position="58"/>
        <end position="86"/>
    </location>
</feature>
<feature type="region of interest" description="Disordered" evidence="7">
    <location>
        <begin position="171"/>
        <end position="218"/>
    </location>
</feature>
<feature type="region of interest" description="Disordered" evidence="7">
    <location>
        <begin position="238"/>
        <end position="268"/>
    </location>
</feature>
<feature type="region of interest" description="Required for interaction with MAPKs" evidence="1">
    <location>
        <begin position="264"/>
        <end position="281"/>
    </location>
</feature>
<feature type="region of interest" description="Disordered" evidence="7">
    <location>
        <begin position="380"/>
        <end position="494"/>
    </location>
</feature>
<feature type="compositionally biased region" description="Low complexity" evidence="7">
    <location>
        <begin position="171"/>
        <end position="181"/>
    </location>
</feature>
<feature type="compositionally biased region" description="Polar residues" evidence="7">
    <location>
        <begin position="380"/>
        <end position="392"/>
    </location>
</feature>
<feature type="compositionally biased region" description="Pro residues" evidence="7">
    <location>
        <begin position="418"/>
        <end position="432"/>
    </location>
</feature>
<feature type="compositionally biased region" description="Low complexity" evidence="7">
    <location>
        <begin position="440"/>
        <end position="453"/>
    </location>
</feature>
<feature type="compositionally biased region" description="Basic and acidic residues" evidence="7">
    <location>
        <begin position="454"/>
        <end position="464"/>
    </location>
</feature>
<feature type="compositionally biased region" description="Basic and acidic residues" evidence="7">
    <location>
        <begin position="475"/>
        <end position="494"/>
    </location>
</feature>
<feature type="site" description="Cleavage" evidence="8">
    <location>
        <begin position="174"/>
        <end position="175"/>
    </location>
</feature>
<feature type="site" description="Cleavage" evidence="8">
    <location>
        <begin position="211"/>
        <end position="212"/>
    </location>
</feature>
<feature type="site" description="Cleavage" evidence="8">
    <location>
        <begin position="453"/>
        <end position="454"/>
    </location>
</feature>
<feature type="modified residue" description="Phosphoserine; by CK2" evidence="1">
    <location>
        <position position="59"/>
    </location>
</feature>
<feature type="modified residue" description="Phosphoserine" evidence="2">
    <location>
        <position position="98"/>
    </location>
</feature>
<feature type="modified residue" description="Phosphoserine" evidence="4">
    <location>
        <position position="108"/>
    </location>
</feature>
<feature type="modified residue" description="Phosphoserine" evidence="2">
    <location>
        <position position="233"/>
    </location>
</feature>
<feature type="modified residue" description="N6-acetyllysine" evidence="2">
    <location>
        <position position="247"/>
    </location>
</feature>
<feature type="modified residue" description="Phosphoserine" evidence="2">
    <location>
        <position position="253"/>
    </location>
</feature>
<feature type="modified residue" description="Phosphothreonine; by MAPK7 and MAPK14" evidence="2">
    <location>
        <position position="302"/>
    </location>
</feature>
<feature type="modified residue" description="Phosphothreonine; by MAPK7 and MAPK14" evidence="2">
    <location>
        <position position="309"/>
    </location>
</feature>
<feature type="modified residue" description="Phosphoserine; by MAPK7" evidence="2">
    <location>
        <position position="345"/>
    </location>
</feature>
<feature type="modified residue" description="N6-acetyllysine; alternate" evidence="3">
    <location>
        <position position="393"/>
    </location>
</feature>
<feature type="modified residue" description="Phosphoserine; by CDK5" evidence="2">
    <location>
        <position position="398"/>
    </location>
</feature>
<feature type="modified residue" description="Phosphothreonine" evidence="4">
    <location>
        <position position="405"/>
    </location>
</feature>
<feature type="modified residue" description="Phosphoserine" evidence="2">
    <location>
        <position position="440"/>
    </location>
</feature>
<feature type="cross-link" description="Glycyl lysine isopeptide (Lys-Gly) (interchain with G-Cter in SUMO); alternate" evidence="1">
    <location>
        <position position="393"/>
    </location>
</feature>
<sequence length="494" mass="53138">MGRKKIQITRIMDERNRQVTFTKRKFGLMKKAYELSVLCDCEIALIIFNSSNKLFQYASTDMDKVLLKYTEYNEPHESRTNSDIVETLRKKGLNGCESPDADDYFEHSPLSEDRFSKLNEDSDFIFKRGPPGLPPQNFSMSVTVPVTSPNALSYTNPGSSLVSPSLAASSTLTDSSMLSPPQTTLHRNVSPGAPQRPPSTGNAGGMLSTTDLIVPNGAGSSPVGNGFVNSRASPNLIGATGANSLGKVMPTKSPPPPGGGNLGMNSRKPDLRVVIPPSSKGMMPPLNTQRISSSQATQPLATPVVSVTTPSLPPQGLVYSAMPTAYNTDYSLTSADLSALQGFNSPGMLSLGQVSAWQQHHLGQAALSSLVAGGQLSQGSNLSINTNQNINIKSEPISPPRDRMTPSGFQQQQQQQQQPPPPPPQPQPPQPQPRQEMGRSPVDSLSSSSSSYDGSDREDPRGDFHSPIVLGRPPNTEDRESPSVKRMRMDAWVT</sequence>
<comment type="function">
    <text evidence="1">Transcriptional activator which binds specifically to the MEF2 element, 5'-YTA[AT](4)TAR-3', found in numerous muscle-specific genes. Also involved in the activation of numerous growth factor- and stress-induced genes. Mediates cellular functions not only in skeletal and cardiac muscle development, but also in neuronal differentiation and survival. Plays diverse roles in the control of cell growth, survival and apoptosis via p38 MAPK signaling in muscle-specific and/or growth factor-related transcription. In cerebellar granule neurons, phosphorylated and sumoylated MEF2A represses transcription of NUR77 promoting synaptic differentiation. Associates with chromatin to the ZNF16 promoter (By similarity).</text>
</comment>
<comment type="subunit">
    <text evidence="1">Binds DNA as a homo- or heterodimer (By similarity). Dimerizes with MEF2D. Interacts with HDAC7. Interacts with PIAS1; the interaction enhances sumoylation. Interacts with HDAC4, HDAC9 and SLC2A4RG. Interacts (via the N-terminal) with MAPK7; the interaction results in the phosphorylation and transcriptional activity of MEF2A (By similarity).</text>
</comment>
<comment type="subcellular location">
    <subcellularLocation>
        <location evidence="6">Nucleus</location>
    </subcellularLocation>
</comment>
<comment type="PTM">
    <text evidence="1">Constitutive phosphorylation on Ser-398 promotes Lys-393 sumoylation thus preventing acetylation at this site. Dephosphorylation on Ser-398 by PPP3CA upon neuron depolarization promotes a switch from sumoylation to acetylation on residue Lys-393 leading to inhibition of dendrite claw differentiation. Phosphorylation on Thr-302 and Thr-309 are the main sites involved in p38 MAPK signaling and activate transcription. Phosphorylated on these sites by MAPK14/p38alpha and MAPK11/p38beta, but not by MAPK13/p38delta nor by MAPK12/p38gamma. Phosphorylation on Ser-398 by CDK5 induced by neurotoxicity inhibits MEF2A transcriptional activation leading to apoptosis of cortical neurons. Phosphorylation on Thr-302, Thr-309 and Ser-345 can be induced by EGF (By similarity).</text>
</comment>
<comment type="PTM">
    <text evidence="1">Sumoylation on Lys-393 is enhanced by PIAS1 and represses transcriptional activity. Phosphorylation on Ser-398 is required for sumoylation. Has no effect on nuclear location nor on DNA binding. Sumoylated with SUMO1 and, to a lesser extent with SUMO2 and SUMO3. PIASx facilitates sumoylation in postsynaptic dendrites in the cerebellar cortex and promotes their morphogenesis (By similarity).</text>
</comment>
<comment type="PTM">
    <text evidence="1">Acetylation on Lys-393 activates transcriptional activity. Acetylated by p300 on several sites in diffentiating myocytes. Acetylation on Lys-4 increases DNA binding and transactivation. Hyperacetylation by p300 leads to enhanced cardiac myocyte growth and heart failure (By similarity).</text>
</comment>
<comment type="PTM">
    <text evidence="1">Proteolytically cleaved in cerebellar granule neurons on several sites by caspase 3 and caspase 7 following neurotoxicity. Preferentially cleaves the CDK5-mediated hyperphosphorylated form which leads to neuron apoptosis and transcriptional inactivation (By similarity).</text>
</comment>
<reference key="1">
    <citation type="submission" date="2004-11" db="EMBL/GenBank/DDBJ databases">
        <authorList>
            <consortium name="The German cDNA consortium"/>
        </authorList>
    </citation>
    <scope>NUCLEOTIDE SEQUENCE [LARGE SCALE MRNA]</scope>
    <source>
        <tissue>Kidney</tissue>
    </source>
</reference>
<organism>
    <name type="scientific">Pongo abelii</name>
    <name type="common">Sumatran orangutan</name>
    <name type="synonym">Pongo pygmaeus abelii</name>
    <dbReference type="NCBI Taxonomy" id="9601"/>
    <lineage>
        <taxon>Eukaryota</taxon>
        <taxon>Metazoa</taxon>
        <taxon>Chordata</taxon>
        <taxon>Craniata</taxon>
        <taxon>Vertebrata</taxon>
        <taxon>Euteleostomi</taxon>
        <taxon>Mammalia</taxon>
        <taxon>Eutheria</taxon>
        <taxon>Euarchontoglires</taxon>
        <taxon>Primates</taxon>
        <taxon>Haplorrhini</taxon>
        <taxon>Catarrhini</taxon>
        <taxon>Hominidae</taxon>
        <taxon>Pongo</taxon>
    </lineage>
</organism>
<accession>Q5REW7</accession>
<keyword id="KW-0007">Acetylation</keyword>
<keyword id="KW-0010">Activator</keyword>
<keyword id="KW-0053">Apoptosis</keyword>
<keyword id="KW-0217">Developmental protein</keyword>
<keyword id="KW-0221">Differentiation</keyword>
<keyword id="KW-0238">DNA-binding</keyword>
<keyword id="KW-1017">Isopeptide bond</keyword>
<keyword id="KW-0524">Neurogenesis</keyword>
<keyword id="KW-0539">Nucleus</keyword>
<keyword id="KW-0597">Phosphoprotein</keyword>
<keyword id="KW-1185">Reference proteome</keyword>
<keyword id="KW-0804">Transcription</keyword>
<keyword id="KW-0805">Transcription regulation</keyword>
<keyword id="KW-0832">Ubl conjugation</keyword>
<dbReference type="EMBL" id="CR857398">
    <property type="protein sequence ID" value="CAH89690.1"/>
    <property type="molecule type" value="mRNA"/>
</dbReference>
<dbReference type="RefSeq" id="NP_001124766.1">
    <property type="nucleotide sequence ID" value="NM_001131294.1"/>
</dbReference>
<dbReference type="SMR" id="Q5REW7"/>
<dbReference type="FunCoup" id="Q5REW7">
    <property type="interactions" value="2911"/>
</dbReference>
<dbReference type="STRING" id="9601.ENSPPYP00000007730"/>
<dbReference type="GeneID" id="100171617"/>
<dbReference type="KEGG" id="pon:100171617"/>
<dbReference type="CTD" id="4205"/>
<dbReference type="eggNOG" id="KOG0014">
    <property type="taxonomic scope" value="Eukaryota"/>
</dbReference>
<dbReference type="InParanoid" id="Q5REW7"/>
<dbReference type="OrthoDB" id="1898716at2759"/>
<dbReference type="Proteomes" id="UP000001595">
    <property type="component" value="Unplaced"/>
</dbReference>
<dbReference type="GO" id="GO:0005634">
    <property type="term" value="C:nucleus"/>
    <property type="evidence" value="ECO:0000250"/>
    <property type="project" value="UniProtKB"/>
</dbReference>
<dbReference type="GO" id="GO:0003682">
    <property type="term" value="F:chromatin binding"/>
    <property type="evidence" value="ECO:0000250"/>
    <property type="project" value="UniProtKB"/>
</dbReference>
<dbReference type="GO" id="GO:0000981">
    <property type="term" value="F:DNA-binding transcription factor activity, RNA polymerase II-specific"/>
    <property type="evidence" value="ECO:0000250"/>
    <property type="project" value="UniProtKB"/>
</dbReference>
<dbReference type="GO" id="GO:0140297">
    <property type="term" value="F:DNA-binding transcription factor binding"/>
    <property type="evidence" value="ECO:0000250"/>
    <property type="project" value="UniProtKB"/>
</dbReference>
<dbReference type="GO" id="GO:0035035">
    <property type="term" value="F:histone acetyltransferase binding"/>
    <property type="evidence" value="ECO:0000250"/>
    <property type="project" value="UniProtKB"/>
</dbReference>
<dbReference type="GO" id="GO:0042826">
    <property type="term" value="F:histone deacetylase binding"/>
    <property type="evidence" value="ECO:0000250"/>
    <property type="project" value="UniProtKB"/>
</dbReference>
<dbReference type="GO" id="GO:0046983">
    <property type="term" value="F:protein dimerization activity"/>
    <property type="evidence" value="ECO:0007669"/>
    <property type="project" value="InterPro"/>
</dbReference>
<dbReference type="GO" id="GO:0000978">
    <property type="term" value="F:RNA polymerase II cis-regulatory region sequence-specific DNA binding"/>
    <property type="evidence" value="ECO:0007669"/>
    <property type="project" value="TreeGrafter"/>
</dbReference>
<dbReference type="GO" id="GO:0000977">
    <property type="term" value="F:RNA polymerase II transcription regulatory region sequence-specific DNA binding"/>
    <property type="evidence" value="ECO:0000250"/>
    <property type="project" value="UniProtKB"/>
</dbReference>
<dbReference type="GO" id="GO:0046332">
    <property type="term" value="F:SMAD binding"/>
    <property type="evidence" value="ECO:0000250"/>
    <property type="project" value="UniProtKB"/>
</dbReference>
<dbReference type="GO" id="GO:0006915">
    <property type="term" value="P:apoptotic process"/>
    <property type="evidence" value="ECO:0007669"/>
    <property type="project" value="UniProtKB-KW"/>
</dbReference>
<dbReference type="GO" id="GO:0061337">
    <property type="term" value="P:cardiac conduction"/>
    <property type="evidence" value="ECO:0000250"/>
    <property type="project" value="UniProtKB"/>
</dbReference>
<dbReference type="GO" id="GO:0071277">
    <property type="term" value="P:cellular response to calcium ion"/>
    <property type="evidence" value="ECO:0000250"/>
    <property type="project" value="UniProtKB"/>
</dbReference>
<dbReference type="GO" id="GO:0048813">
    <property type="term" value="P:dendrite morphogenesis"/>
    <property type="evidence" value="ECO:0000250"/>
    <property type="project" value="UniProtKB"/>
</dbReference>
<dbReference type="GO" id="GO:0070375">
    <property type="term" value="P:ERK5 cascade"/>
    <property type="evidence" value="ECO:0000250"/>
    <property type="project" value="UniProtKB"/>
</dbReference>
<dbReference type="GO" id="GO:0000165">
    <property type="term" value="P:MAPK cascade"/>
    <property type="evidence" value="ECO:0000250"/>
    <property type="project" value="UniProtKB"/>
</dbReference>
<dbReference type="GO" id="GO:0000002">
    <property type="term" value="P:mitochondrial genome maintenance"/>
    <property type="evidence" value="ECO:0000250"/>
    <property type="project" value="UniProtKB"/>
</dbReference>
<dbReference type="GO" id="GO:0048311">
    <property type="term" value="P:mitochondrion distribution"/>
    <property type="evidence" value="ECO:0000250"/>
    <property type="project" value="UniProtKB"/>
</dbReference>
<dbReference type="GO" id="GO:0000122">
    <property type="term" value="P:negative regulation of transcription by RNA polymerase II"/>
    <property type="evidence" value="ECO:0000250"/>
    <property type="project" value="UniProtKB"/>
</dbReference>
<dbReference type="GO" id="GO:0045944">
    <property type="term" value="P:positive regulation of transcription by RNA polymerase II"/>
    <property type="evidence" value="ECO:0000250"/>
    <property type="project" value="UniProtKB"/>
</dbReference>
<dbReference type="GO" id="GO:0055005">
    <property type="term" value="P:ventricular cardiac myofibril assembly"/>
    <property type="evidence" value="ECO:0000250"/>
    <property type="project" value="UniProtKB"/>
</dbReference>
<dbReference type="CDD" id="cd00265">
    <property type="entry name" value="MADS_MEF2_like"/>
    <property type="match status" value="1"/>
</dbReference>
<dbReference type="FunFam" id="3.40.1810.10:FF:000001">
    <property type="entry name" value="Myocyte-specific enhancer factor 2A homolog"/>
    <property type="match status" value="1"/>
</dbReference>
<dbReference type="Gene3D" id="3.40.1810.10">
    <property type="entry name" value="Transcription factor, MADS-box"/>
    <property type="match status" value="1"/>
</dbReference>
<dbReference type="InterPro" id="IPR022102">
    <property type="entry name" value="HJURP_C"/>
</dbReference>
<dbReference type="InterPro" id="IPR033896">
    <property type="entry name" value="MEF2-like_N"/>
</dbReference>
<dbReference type="InterPro" id="IPR002100">
    <property type="entry name" value="TF_MADSbox"/>
</dbReference>
<dbReference type="InterPro" id="IPR036879">
    <property type="entry name" value="TF_MADSbox_sf"/>
</dbReference>
<dbReference type="PANTHER" id="PTHR11945">
    <property type="entry name" value="MADS BOX PROTEIN"/>
    <property type="match status" value="1"/>
</dbReference>
<dbReference type="PANTHER" id="PTHR11945:SF534">
    <property type="entry name" value="MYOCYTE-SPECIFIC ENHANCER FACTOR 2"/>
    <property type="match status" value="1"/>
</dbReference>
<dbReference type="Pfam" id="PF12347">
    <property type="entry name" value="HJURP_C"/>
    <property type="match status" value="1"/>
</dbReference>
<dbReference type="Pfam" id="PF00319">
    <property type="entry name" value="SRF-TF"/>
    <property type="match status" value="1"/>
</dbReference>
<dbReference type="PRINTS" id="PR00404">
    <property type="entry name" value="MADSDOMAIN"/>
</dbReference>
<dbReference type="SMART" id="SM00432">
    <property type="entry name" value="MADS"/>
    <property type="match status" value="1"/>
</dbReference>
<dbReference type="SUPFAM" id="SSF55455">
    <property type="entry name" value="SRF-like"/>
    <property type="match status" value="1"/>
</dbReference>
<dbReference type="PROSITE" id="PS00350">
    <property type="entry name" value="MADS_BOX_1"/>
    <property type="match status" value="1"/>
</dbReference>
<dbReference type="PROSITE" id="PS50066">
    <property type="entry name" value="MADS_BOX_2"/>
    <property type="match status" value="1"/>
</dbReference>